<accession>A6VQS4</accession>
<comment type="function">
    <text evidence="1">Site-specific tyrosine recombinase, which acts by catalyzing the cutting and rejoining of the recombining DNA molecules. The XerC-XerD complex is essential to convert dimers of the bacterial chromosome into monomers to permit their segregation at cell division. It also contributes to the segregational stability of plasmids.</text>
</comment>
<comment type="subunit">
    <text evidence="1">Forms a cyclic heterotetrameric complex composed of two molecules of XerC and two molecules of XerD.</text>
</comment>
<comment type="subcellular location">
    <subcellularLocation>
        <location evidence="1">Cytoplasm</location>
    </subcellularLocation>
</comment>
<comment type="similarity">
    <text evidence="1">Belongs to the 'phage' integrase family. XerC subfamily.</text>
</comment>
<feature type="chain" id="PRO_1000073664" description="Tyrosine recombinase XerC">
    <location>
        <begin position="1"/>
        <end position="295"/>
    </location>
</feature>
<feature type="domain" description="Core-binding (CB)" evidence="3">
    <location>
        <begin position="1"/>
        <end position="85"/>
    </location>
</feature>
<feature type="domain" description="Tyr recombinase" evidence="2">
    <location>
        <begin position="106"/>
        <end position="285"/>
    </location>
</feature>
<feature type="active site" evidence="1">
    <location>
        <position position="145"/>
    </location>
</feature>
<feature type="active site" evidence="1">
    <location>
        <position position="169"/>
    </location>
</feature>
<feature type="active site" evidence="1">
    <location>
        <position position="237"/>
    </location>
</feature>
<feature type="active site" evidence="1">
    <location>
        <position position="240"/>
    </location>
</feature>
<feature type="active site" evidence="1">
    <location>
        <position position="263"/>
    </location>
</feature>
<feature type="active site" description="O-(3'-phospho-DNA)-tyrosine intermediate" evidence="1">
    <location>
        <position position="272"/>
    </location>
</feature>
<name>XERC_ACTSZ</name>
<sequence>MQNALQKYYDFLRIERRLSPYTLTNYRRQLSAVTELLTQNGIRSWQQVTPSVVRFILAESRKAGLHEKSLALRLSALRQFLAYLVVQEELKVNPATGISAPKQGKYLPKNIDQEQIGKLLDNRSNEPIDIRDRAMLELMYSSGLRLSELHGLDLNHVNLQSREVRVLGKGSKERILPVGHQALDAVLDWLQVRLRFNPKDNALFVSSQGGRLTPRAIQKRMEIWGVKQGLSTHLNPHKLRHSFATHMLEASADLRAVQELLGHSNLATTQIYTHLDFKHLTDVYDQAHPRAKRKG</sequence>
<organism>
    <name type="scientific">Actinobacillus succinogenes (strain ATCC 55618 / DSM 22257 / CCUG 43843 / 130Z)</name>
    <dbReference type="NCBI Taxonomy" id="339671"/>
    <lineage>
        <taxon>Bacteria</taxon>
        <taxon>Pseudomonadati</taxon>
        <taxon>Pseudomonadota</taxon>
        <taxon>Gammaproteobacteria</taxon>
        <taxon>Pasteurellales</taxon>
        <taxon>Pasteurellaceae</taxon>
        <taxon>Actinobacillus</taxon>
    </lineage>
</organism>
<proteinExistence type="inferred from homology"/>
<reference key="1">
    <citation type="journal article" date="2010" name="BMC Genomics">
        <title>A genomic perspective on the potential of Actinobacillus succinogenes for industrial succinate production.</title>
        <authorList>
            <person name="McKinlay J.B."/>
            <person name="Laivenieks M."/>
            <person name="Schindler B.D."/>
            <person name="McKinlay A.A."/>
            <person name="Siddaramappa S."/>
            <person name="Challacombe J.F."/>
            <person name="Lowry S.R."/>
            <person name="Clum A."/>
            <person name="Lapidus A.L."/>
            <person name="Burkhart K.B."/>
            <person name="Harkins V."/>
            <person name="Vieille C."/>
        </authorList>
    </citation>
    <scope>NUCLEOTIDE SEQUENCE [LARGE SCALE GENOMIC DNA]</scope>
    <source>
        <strain>ATCC 55618 / DSM 22257 / CCUG 43843 / 130Z</strain>
    </source>
</reference>
<evidence type="ECO:0000255" key="1">
    <source>
        <dbReference type="HAMAP-Rule" id="MF_01808"/>
    </source>
</evidence>
<evidence type="ECO:0000255" key="2">
    <source>
        <dbReference type="PROSITE-ProRule" id="PRU01246"/>
    </source>
</evidence>
<evidence type="ECO:0000255" key="3">
    <source>
        <dbReference type="PROSITE-ProRule" id="PRU01248"/>
    </source>
</evidence>
<keyword id="KW-0131">Cell cycle</keyword>
<keyword id="KW-0132">Cell division</keyword>
<keyword id="KW-0159">Chromosome partition</keyword>
<keyword id="KW-0963">Cytoplasm</keyword>
<keyword id="KW-0229">DNA integration</keyword>
<keyword id="KW-0233">DNA recombination</keyword>
<keyword id="KW-0238">DNA-binding</keyword>
<keyword id="KW-1185">Reference proteome</keyword>
<protein>
    <recommendedName>
        <fullName evidence="1">Tyrosine recombinase XerC</fullName>
    </recommendedName>
</protein>
<gene>
    <name evidence="1" type="primary">xerC</name>
    <name type="ordered locus">Asuc_1974</name>
</gene>
<dbReference type="EMBL" id="CP000746">
    <property type="protein sequence ID" value="ABR75321.1"/>
    <property type="molecule type" value="Genomic_DNA"/>
</dbReference>
<dbReference type="RefSeq" id="WP_012073698.1">
    <property type="nucleotide sequence ID" value="NC_009655.1"/>
</dbReference>
<dbReference type="SMR" id="A6VQS4"/>
<dbReference type="STRING" id="339671.Asuc_1974"/>
<dbReference type="KEGG" id="asu:Asuc_1974"/>
<dbReference type="eggNOG" id="COG4973">
    <property type="taxonomic scope" value="Bacteria"/>
</dbReference>
<dbReference type="HOGENOM" id="CLU_027562_9_0_6"/>
<dbReference type="OrthoDB" id="9801717at2"/>
<dbReference type="Proteomes" id="UP000001114">
    <property type="component" value="Chromosome"/>
</dbReference>
<dbReference type="GO" id="GO:0005737">
    <property type="term" value="C:cytoplasm"/>
    <property type="evidence" value="ECO:0007669"/>
    <property type="project" value="UniProtKB-SubCell"/>
</dbReference>
<dbReference type="GO" id="GO:0003677">
    <property type="term" value="F:DNA binding"/>
    <property type="evidence" value="ECO:0007669"/>
    <property type="project" value="UniProtKB-KW"/>
</dbReference>
<dbReference type="GO" id="GO:0009037">
    <property type="term" value="F:tyrosine-based site-specific recombinase activity"/>
    <property type="evidence" value="ECO:0007669"/>
    <property type="project" value="UniProtKB-UniRule"/>
</dbReference>
<dbReference type="GO" id="GO:0051301">
    <property type="term" value="P:cell division"/>
    <property type="evidence" value="ECO:0007669"/>
    <property type="project" value="UniProtKB-KW"/>
</dbReference>
<dbReference type="GO" id="GO:0007059">
    <property type="term" value="P:chromosome segregation"/>
    <property type="evidence" value="ECO:0007669"/>
    <property type="project" value="UniProtKB-UniRule"/>
</dbReference>
<dbReference type="GO" id="GO:0006313">
    <property type="term" value="P:DNA transposition"/>
    <property type="evidence" value="ECO:0007669"/>
    <property type="project" value="UniProtKB-UniRule"/>
</dbReference>
<dbReference type="CDD" id="cd00798">
    <property type="entry name" value="INT_XerDC_C"/>
    <property type="match status" value="1"/>
</dbReference>
<dbReference type="Gene3D" id="1.10.150.130">
    <property type="match status" value="1"/>
</dbReference>
<dbReference type="Gene3D" id="1.10.443.10">
    <property type="entry name" value="Intergrase catalytic core"/>
    <property type="match status" value="1"/>
</dbReference>
<dbReference type="HAMAP" id="MF_01808">
    <property type="entry name" value="Recomb_XerC_XerD"/>
    <property type="match status" value="1"/>
</dbReference>
<dbReference type="InterPro" id="IPR044068">
    <property type="entry name" value="CB"/>
</dbReference>
<dbReference type="InterPro" id="IPR011010">
    <property type="entry name" value="DNA_brk_join_enz"/>
</dbReference>
<dbReference type="InterPro" id="IPR013762">
    <property type="entry name" value="Integrase-like_cat_sf"/>
</dbReference>
<dbReference type="InterPro" id="IPR002104">
    <property type="entry name" value="Integrase_catalytic"/>
</dbReference>
<dbReference type="InterPro" id="IPR010998">
    <property type="entry name" value="Integrase_recombinase_N"/>
</dbReference>
<dbReference type="InterPro" id="IPR004107">
    <property type="entry name" value="Integrase_SAM-like_N"/>
</dbReference>
<dbReference type="InterPro" id="IPR011931">
    <property type="entry name" value="Recomb_XerC"/>
</dbReference>
<dbReference type="InterPro" id="IPR023009">
    <property type="entry name" value="Tyrosine_recombinase_XerC/XerD"/>
</dbReference>
<dbReference type="InterPro" id="IPR050090">
    <property type="entry name" value="Tyrosine_recombinase_XerCD"/>
</dbReference>
<dbReference type="NCBIfam" id="NF001399">
    <property type="entry name" value="PRK00283.1"/>
    <property type="match status" value="1"/>
</dbReference>
<dbReference type="NCBIfam" id="TIGR02224">
    <property type="entry name" value="recomb_XerC"/>
    <property type="match status" value="1"/>
</dbReference>
<dbReference type="PANTHER" id="PTHR30349">
    <property type="entry name" value="PHAGE INTEGRASE-RELATED"/>
    <property type="match status" value="1"/>
</dbReference>
<dbReference type="PANTHER" id="PTHR30349:SF81">
    <property type="entry name" value="TYROSINE RECOMBINASE XERC"/>
    <property type="match status" value="1"/>
</dbReference>
<dbReference type="Pfam" id="PF02899">
    <property type="entry name" value="Phage_int_SAM_1"/>
    <property type="match status" value="1"/>
</dbReference>
<dbReference type="Pfam" id="PF00589">
    <property type="entry name" value="Phage_integrase"/>
    <property type="match status" value="1"/>
</dbReference>
<dbReference type="SUPFAM" id="SSF56349">
    <property type="entry name" value="DNA breaking-rejoining enzymes"/>
    <property type="match status" value="1"/>
</dbReference>
<dbReference type="SUPFAM" id="SSF47823">
    <property type="entry name" value="lambda integrase-like, N-terminal domain"/>
    <property type="match status" value="1"/>
</dbReference>
<dbReference type="PROSITE" id="PS51900">
    <property type="entry name" value="CB"/>
    <property type="match status" value="1"/>
</dbReference>
<dbReference type="PROSITE" id="PS51898">
    <property type="entry name" value="TYR_RECOMBINASE"/>
    <property type="match status" value="1"/>
</dbReference>